<feature type="chain" id="PRO_0000395867" description="POC1 centriolar protein homolog B">
    <location>
        <begin position="1"/>
        <end position="490"/>
    </location>
</feature>
<feature type="repeat" description="WD 1" evidence="2">
    <location>
        <begin position="16"/>
        <end position="55"/>
    </location>
</feature>
<feature type="repeat" description="WD 2" evidence="2">
    <location>
        <begin position="58"/>
        <end position="97"/>
    </location>
</feature>
<feature type="repeat" description="WD 3" evidence="2">
    <location>
        <begin position="100"/>
        <end position="139"/>
    </location>
</feature>
<feature type="repeat" description="WD 4" evidence="2">
    <location>
        <begin position="142"/>
        <end position="181"/>
    </location>
</feature>
<feature type="repeat" description="WD 5" evidence="2">
    <location>
        <begin position="184"/>
        <end position="223"/>
    </location>
</feature>
<feature type="repeat" description="WD 6" evidence="2">
    <location>
        <begin position="226"/>
        <end position="265"/>
    </location>
</feature>
<feature type="repeat" description="WD 7" evidence="2">
    <location>
        <begin position="268"/>
        <end position="307"/>
    </location>
</feature>
<feature type="region of interest" description="Disordered" evidence="3">
    <location>
        <begin position="375"/>
        <end position="427"/>
    </location>
</feature>
<feature type="coiled-coil region" evidence="2">
    <location>
        <begin position="431"/>
        <end position="463"/>
    </location>
</feature>
<feature type="compositionally biased region" description="Polar residues" evidence="3">
    <location>
        <begin position="375"/>
        <end position="388"/>
    </location>
</feature>
<feature type="sequence conflict" description="In Ref. 1; AAQ97974 and 3; AAH55275." evidence="5" ref="1 3">
    <original>H</original>
    <variation>N</variation>
    <location>
        <position position="109"/>
    </location>
</feature>
<feature type="sequence conflict" description="In Ref. 3; AAH55275." evidence="5" ref="3">
    <original>I</original>
    <variation>T</variation>
    <location>
        <position position="179"/>
    </location>
</feature>
<feature type="sequence conflict" description="In Ref. 1; AAQ97974 and 3; AAH55275." evidence="5" ref="1 3">
    <original>K</original>
    <variation>R</variation>
    <location>
        <position position="312"/>
    </location>
</feature>
<feature type="sequence conflict" description="In Ref. 1; AAQ97974 and 3; AAH55275." evidence="5" ref="1 3">
    <original>S</original>
    <variation>L</variation>
    <location>
        <position position="390"/>
    </location>
</feature>
<feature type="sequence conflict" description="In Ref. 1; AAQ97974 and 3; AAH55275." evidence="5" ref="1 3">
    <original>F</original>
    <variation>L</variation>
    <location>
        <position position="393"/>
    </location>
</feature>
<gene>
    <name evidence="9" type="primary">poc1b</name>
    <name type="synonym">tuwd12</name>
    <name evidence="6 9" type="synonym">wdr51b</name>
    <name type="ORF">si:dkey-164B12.2</name>
</gene>
<keyword id="KW-0970">Cilium biogenesis/degradation</keyword>
<keyword id="KW-0175">Coiled coil</keyword>
<keyword id="KW-0963">Cytoplasm</keyword>
<keyword id="KW-0206">Cytoskeleton</keyword>
<keyword id="KW-1185">Reference proteome</keyword>
<keyword id="KW-0677">Repeat</keyword>
<keyword id="KW-0853">WD repeat</keyword>
<dbReference type="EMBL" id="AY422998">
    <property type="protein sequence ID" value="AAQ97974.1"/>
    <property type="molecule type" value="mRNA"/>
</dbReference>
<dbReference type="EMBL" id="CR405685">
    <property type="protein sequence ID" value="CAM15113.1"/>
    <property type="molecule type" value="Genomic_DNA"/>
</dbReference>
<dbReference type="EMBL" id="CT033837">
    <property type="protein sequence ID" value="CAM15113.1"/>
    <property type="status" value="JOINED"/>
    <property type="molecule type" value="Genomic_DNA"/>
</dbReference>
<dbReference type="EMBL" id="BC055275">
    <property type="protein sequence ID" value="AAH55275.1"/>
    <property type="molecule type" value="mRNA"/>
</dbReference>
<dbReference type="RefSeq" id="NP_956412.1">
    <property type="nucleotide sequence ID" value="NM_200118.1"/>
</dbReference>
<dbReference type="SMR" id="A2CEH0"/>
<dbReference type="FunCoup" id="A2CEH0">
    <property type="interactions" value="475"/>
</dbReference>
<dbReference type="STRING" id="7955.ENSDARP00000026057"/>
<dbReference type="PaxDb" id="7955-ENSDARP00000026057"/>
<dbReference type="PeptideAtlas" id="A2CEH0"/>
<dbReference type="Ensembl" id="ENSDART00000004771">
    <property type="protein sequence ID" value="ENSDARP00000026057"/>
    <property type="gene ID" value="ENSDARG00000021110"/>
</dbReference>
<dbReference type="GeneID" id="386932"/>
<dbReference type="KEGG" id="dre:386932"/>
<dbReference type="AGR" id="ZFIN:ZDB-GENE-031118-54"/>
<dbReference type="CTD" id="282809"/>
<dbReference type="ZFIN" id="ZDB-GENE-031118-54">
    <property type="gene designation" value="poc1b"/>
</dbReference>
<dbReference type="eggNOG" id="ENOG502QSVJ">
    <property type="taxonomic scope" value="Eukaryota"/>
</dbReference>
<dbReference type="HOGENOM" id="CLU_000288_57_17_1"/>
<dbReference type="InParanoid" id="A2CEH0"/>
<dbReference type="OMA" id="QCRAYRF"/>
<dbReference type="OrthoDB" id="10264588at2759"/>
<dbReference type="PhylomeDB" id="A2CEH0"/>
<dbReference type="TreeFam" id="TF324210"/>
<dbReference type="PRO" id="PR:A2CEH0"/>
<dbReference type="Proteomes" id="UP000000437">
    <property type="component" value="Alternate scaffold 25"/>
</dbReference>
<dbReference type="Proteomes" id="UP000000437">
    <property type="component" value="Chromosome 25"/>
</dbReference>
<dbReference type="Bgee" id="ENSDARG00000021110">
    <property type="expression patterns" value="Expressed in blastula and 20 other cell types or tissues"/>
</dbReference>
<dbReference type="GO" id="GO:0005814">
    <property type="term" value="C:centriole"/>
    <property type="evidence" value="ECO:0000250"/>
    <property type="project" value="UniProtKB"/>
</dbReference>
<dbReference type="GO" id="GO:0036064">
    <property type="term" value="C:ciliary basal body"/>
    <property type="evidence" value="ECO:0000318"/>
    <property type="project" value="GO_Central"/>
</dbReference>
<dbReference type="GO" id="GO:0005737">
    <property type="term" value="C:cytoplasm"/>
    <property type="evidence" value="ECO:0007669"/>
    <property type="project" value="UniProtKB-KW"/>
</dbReference>
<dbReference type="GO" id="GO:0005576">
    <property type="term" value="C:extracellular region"/>
    <property type="evidence" value="ECO:0007669"/>
    <property type="project" value="GOC"/>
</dbReference>
<dbReference type="GO" id="GO:0007099">
    <property type="term" value="P:centriole replication"/>
    <property type="evidence" value="ECO:0000250"/>
    <property type="project" value="UniProtKB"/>
</dbReference>
<dbReference type="GO" id="GO:0060271">
    <property type="term" value="P:cilium assembly"/>
    <property type="evidence" value="ECO:0000315"/>
    <property type="project" value="ZFIN"/>
</dbReference>
<dbReference type="GO" id="GO:0060287">
    <property type="term" value="P:epithelial cilium movement involved in determination of left/right asymmetry"/>
    <property type="evidence" value="ECO:0000315"/>
    <property type="project" value="ZFIN"/>
</dbReference>
<dbReference type="GO" id="GO:0007507">
    <property type="term" value="P:heart development"/>
    <property type="evidence" value="ECO:0000315"/>
    <property type="project" value="ZFIN"/>
</dbReference>
<dbReference type="GO" id="GO:0007634">
    <property type="term" value="P:optokinetic behavior"/>
    <property type="evidence" value="ECO:0000315"/>
    <property type="project" value="ZFIN"/>
</dbReference>
<dbReference type="GO" id="GO:0003014">
    <property type="term" value="P:renal system process"/>
    <property type="evidence" value="ECO:0000315"/>
    <property type="project" value="ZFIN"/>
</dbReference>
<dbReference type="GO" id="GO:0001895">
    <property type="term" value="P:retina homeostasis"/>
    <property type="evidence" value="ECO:0000250"/>
    <property type="project" value="UniProtKB"/>
</dbReference>
<dbReference type="GO" id="GO:0010842">
    <property type="term" value="P:retina layer formation"/>
    <property type="evidence" value="ECO:0000315"/>
    <property type="project" value="ZFIN"/>
</dbReference>
<dbReference type="CDD" id="cd00200">
    <property type="entry name" value="WD40"/>
    <property type="match status" value="1"/>
</dbReference>
<dbReference type="FunFam" id="2.130.10.10:FF:000528">
    <property type="entry name" value="POC1 centriolar protein homolog B"/>
    <property type="match status" value="1"/>
</dbReference>
<dbReference type="Gene3D" id="2.130.10.10">
    <property type="entry name" value="YVTN repeat-like/Quinoprotein amine dehydrogenase"/>
    <property type="match status" value="2"/>
</dbReference>
<dbReference type="InterPro" id="IPR020472">
    <property type="entry name" value="G-protein_beta_WD-40_rep"/>
</dbReference>
<dbReference type="InterPro" id="IPR015943">
    <property type="entry name" value="WD40/YVTN_repeat-like_dom_sf"/>
</dbReference>
<dbReference type="InterPro" id="IPR019775">
    <property type="entry name" value="WD40_repeat_CS"/>
</dbReference>
<dbReference type="InterPro" id="IPR036322">
    <property type="entry name" value="WD40_repeat_dom_sf"/>
</dbReference>
<dbReference type="InterPro" id="IPR001680">
    <property type="entry name" value="WD40_rpt"/>
</dbReference>
<dbReference type="InterPro" id="IPR050505">
    <property type="entry name" value="WDR55_POC1"/>
</dbReference>
<dbReference type="PANTHER" id="PTHR44019:SF1">
    <property type="entry name" value="POC1 CENTRIOLAR PROTEIN HOMOLOG B"/>
    <property type="match status" value="1"/>
</dbReference>
<dbReference type="PANTHER" id="PTHR44019">
    <property type="entry name" value="WD REPEAT-CONTAINING PROTEIN 55"/>
    <property type="match status" value="1"/>
</dbReference>
<dbReference type="Pfam" id="PF00400">
    <property type="entry name" value="WD40"/>
    <property type="match status" value="7"/>
</dbReference>
<dbReference type="PRINTS" id="PR00320">
    <property type="entry name" value="GPROTEINBRPT"/>
</dbReference>
<dbReference type="SMART" id="SM00320">
    <property type="entry name" value="WD40"/>
    <property type="match status" value="7"/>
</dbReference>
<dbReference type="SUPFAM" id="SSF50978">
    <property type="entry name" value="WD40 repeat-like"/>
    <property type="match status" value="1"/>
</dbReference>
<dbReference type="PROSITE" id="PS00678">
    <property type="entry name" value="WD_REPEATS_1"/>
    <property type="match status" value="3"/>
</dbReference>
<dbReference type="PROSITE" id="PS50082">
    <property type="entry name" value="WD_REPEATS_2"/>
    <property type="match status" value="7"/>
</dbReference>
<dbReference type="PROSITE" id="PS50294">
    <property type="entry name" value="WD_REPEATS_REGION"/>
    <property type="match status" value="1"/>
</dbReference>
<evidence type="ECO:0000250" key="1">
    <source>
        <dbReference type="UniProtKB" id="Q8TC44"/>
    </source>
</evidence>
<evidence type="ECO:0000255" key="2"/>
<evidence type="ECO:0000256" key="3">
    <source>
        <dbReference type="SAM" id="MobiDB-lite"/>
    </source>
</evidence>
<evidence type="ECO:0000269" key="4">
    <source>
    </source>
</evidence>
<evidence type="ECO:0000305" key="5"/>
<evidence type="ECO:0000312" key="6">
    <source>
        <dbReference type="EMBL" id="AAH55275.1"/>
    </source>
</evidence>
<evidence type="ECO:0000312" key="7">
    <source>
        <dbReference type="EMBL" id="AAQ97974.1"/>
    </source>
</evidence>
<evidence type="ECO:0000312" key="8">
    <source>
        <dbReference type="EMBL" id="CAM15113.1"/>
    </source>
</evidence>
<evidence type="ECO:0000312" key="9">
    <source>
        <dbReference type="ZFIN" id="ZDB-GENE-031118-54"/>
    </source>
</evidence>
<comment type="function">
    <text evidence="1 4">Plays an important role in centriole assembly and/or stability and ciliogenesis. Involved in early steps of centriole duplication, as well as in the later steps of centriole length control.</text>
</comment>
<comment type="subcellular location">
    <subcellularLocation>
        <location evidence="1">Cytoplasm</location>
        <location evidence="1">Cytoskeleton</location>
        <location evidence="1">Microtubule organizing center</location>
        <location evidence="1">Centrosome</location>
        <location evidence="1">Centriole</location>
    </subcellularLocation>
</comment>
<comment type="similarity">
    <text evidence="5">Belongs to the WD repeat POC1 family.</text>
</comment>
<name>POC1B_DANRE</name>
<accession>A2CEH0</accession>
<accession>Q6TEQ1</accession>
<accession>Q7SXR5</accession>
<organism>
    <name type="scientific">Danio rerio</name>
    <name type="common">Zebrafish</name>
    <name type="synonym">Brachydanio rerio</name>
    <dbReference type="NCBI Taxonomy" id="7955"/>
    <lineage>
        <taxon>Eukaryota</taxon>
        <taxon>Metazoa</taxon>
        <taxon>Chordata</taxon>
        <taxon>Craniata</taxon>
        <taxon>Vertebrata</taxon>
        <taxon>Euteleostomi</taxon>
        <taxon>Actinopterygii</taxon>
        <taxon>Neopterygii</taxon>
        <taxon>Teleostei</taxon>
        <taxon>Ostariophysi</taxon>
        <taxon>Cypriniformes</taxon>
        <taxon>Danionidae</taxon>
        <taxon>Danioninae</taxon>
        <taxon>Danio</taxon>
    </lineage>
</organism>
<proteinExistence type="evidence at transcript level"/>
<sequence>MASVMEDPTLERHFKGHKDVISCADFNPNNKQLATGSCDKSLMIWNLAPKARAFRFVGHTDVITGVNFAPSGSLVASSSRDQTVRLWTPSIKGESTVFKAHTASVRSVHFSRDGQRLVTASDDKSVKVWGVERKKFLYSLNRHTNWVRCARFSPDGRLIASCGDDRTVRLWDTSSHQCINIFTDYGGSATFVDFNSSGTCIASSGADNTIKIWDIRTNKLIQHYKVHNAGVNCFSFHPSGNYLISGSSDSTIKILDLLEGRLIYTLHGHKGPVLTVTFSRDGDLFASGGADSQVLMWKTNFDSLNYRELLSKHSKRVTPDPPPHLMDIYPRSHHRHHPQNGTVEINPVADTQSTDPQVVEVGRVVFSTTDARNYDGASSSRAQFTSGMDSGPFRTHTQAREEEDENQEERFAGGMTASPAERSGIPSSLTSTLENIVQQLDILTQTVAVLEERLTLTEDKLRTCLDNQVLLMQQNQQLDRSDEESEGPPL</sequence>
<reference evidence="7" key="1">
    <citation type="journal article" date="2004" name="Proc. Natl. Acad. Sci. U.S.A.">
        <title>Hematopoietic gene expression profile in zebrafish kidney marrow.</title>
        <authorList>
            <person name="Song H.-D."/>
            <person name="Sun X.-J."/>
            <person name="Deng M."/>
            <person name="Zhang G.-W."/>
            <person name="Zhou Y."/>
            <person name="Wu X.-Y."/>
            <person name="Sheng Y."/>
            <person name="Chen Y."/>
            <person name="Ruan Z."/>
            <person name="Jiang C.-L."/>
            <person name="Fan H.-Y."/>
            <person name="Zon L.I."/>
            <person name="Kanki J.P."/>
            <person name="Liu T.X."/>
            <person name="Look A.T."/>
            <person name="Chen Z."/>
        </authorList>
    </citation>
    <scope>NUCLEOTIDE SEQUENCE [LARGE SCALE MRNA]</scope>
    <source>
        <tissue evidence="7">Kidney marrow</tissue>
    </source>
</reference>
<reference key="2">
    <citation type="journal article" date="2013" name="Nature">
        <title>The zebrafish reference genome sequence and its relationship to the human genome.</title>
        <authorList>
            <person name="Howe K."/>
            <person name="Clark M.D."/>
            <person name="Torroja C.F."/>
            <person name="Torrance J."/>
            <person name="Berthelot C."/>
            <person name="Muffato M."/>
            <person name="Collins J.E."/>
            <person name="Humphray S."/>
            <person name="McLaren K."/>
            <person name="Matthews L."/>
            <person name="McLaren S."/>
            <person name="Sealy I."/>
            <person name="Caccamo M."/>
            <person name="Churcher C."/>
            <person name="Scott C."/>
            <person name="Barrett J.C."/>
            <person name="Koch R."/>
            <person name="Rauch G.J."/>
            <person name="White S."/>
            <person name="Chow W."/>
            <person name="Kilian B."/>
            <person name="Quintais L.T."/>
            <person name="Guerra-Assuncao J.A."/>
            <person name="Zhou Y."/>
            <person name="Gu Y."/>
            <person name="Yen J."/>
            <person name="Vogel J.H."/>
            <person name="Eyre T."/>
            <person name="Redmond S."/>
            <person name="Banerjee R."/>
            <person name="Chi J."/>
            <person name="Fu B."/>
            <person name="Langley E."/>
            <person name="Maguire S.F."/>
            <person name="Laird G.K."/>
            <person name="Lloyd D."/>
            <person name="Kenyon E."/>
            <person name="Donaldson S."/>
            <person name="Sehra H."/>
            <person name="Almeida-King J."/>
            <person name="Loveland J."/>
            <person name="Trevanion S."/>
            <person name="Jones M."/>
            <person name="Quail M."/>
            <person name="Willey D."/>
            <person name="Hunt A."/>
            <person name="Burton J."/>
            <person name="Sims S."/>
            <person name="McLay K."/>
            <person name="Plumb B."/>
            <person name="Davis J."/>
            <person name="Clee C."/>
            <person name="Oliver K."/>
            <person name="Clark R."/>
            <person name="Riddle C."/>
            <person name="Elliot D."/>
            <person name="Threadgold G."/>
            <person name="Harden G."/>
            <person name="Ware D."/>
            <person name="Begum S."/>
            <person name="Mortimore B."/>
            <person name="Kerry G."/>
            <person name="Heath P."/>
            <person name="Phillimore B."/>
            <person name="Tracey A."/>
            <person name="Corby N."/>
            <person name="Dunn M."/>
            <person name="Johnson C."/>
            <person name="Wood J."/>
            <person name="Clark S."/>
            <person name="Pelan S."/>
            <person name="Griffiths G."/>
            <person name="Smith M."/>
            <person name="Glithero R."/>
            <person name="Howden P."/>
            <person name="Barker N."/>
            <person name="Lloyd C."/>
            <person name="Stevens C."/>
            <person name="Harley J."/>
            <person name="Holt K."/>
            <person name="Panagiotidis G."/>
            <person name="Lovell J."/>
            <person name="Beasley H."/>
            <person name="Henderson C."/>
            <person name="Gordon D."/>
            <person name="Auger K."/>
            <person name="Wright D."/>
            <person name="Collins J."/>
            <person name="Raisen C."/>
            <person name="Dyer L."/>
            <person name="Leung K."/>
            <person name="Robertson L."/>
            <person name="Ambridge K."/>
            <person name="Leongamornlert D."/>
            <person name="McGuire S."/>
            <person name="Gilderthorp R."/>
            <person name="Griffiths C."/>
            <person name="Manthravadi D."/>
            <person name="Nichol S."/>
            <person name="Barker G."/>
            <person name="Whitehead S."/>
            <person name="Kay M."/>
            <person name="Brown J."/>
            <person name="Murnane C."/>
            <person name="Gray E."/>
            <person name="Humphries M."/>
            <person name="Sycamore N."/>
            <person name="Barker D."/>
            <person name="Saunders D."/>
            <person name="Wallis J."/>
            <person name="Babbage A."/>
            <person name="Hammond S."/>
            <person name="Mashreghi-Mohammadi M."/>
            <person name="Barr L."/>
            <person name="Martin S."/>
            <person name="Wray P."/>
            <person name="Ellington A."/>
            <person name="Matthews N."/>
            <person name="Ellwood M."/>
            <person name="Woodmansey R."/>
            <person name="Clark G."/>
            <person name="Cooper J."/>
            <person name="Tromans A."/>
            <person name="Grafham D."/>
            <person name="Skuce C."/>
            <person name="Pandian R."/>
            <person name="Andrews R."/>
            <person name="Harrison E."/>
            <person name="Kimberley A."/>
            <person name="Garnett J."/>
            <person name="Fosker N."/>
            <person name="Hall R."/>
            <person name="Garner P."/>
            <person name="Kelly D."/>
            <person name="Bird C."/>
            <person name="Palmer S."/>
            <person name="Gehring I."/>
            <person name="Berger A."/>
            <person name="Dooley C.M."/>
            <person name="Ersan-Urun Z."/>
            <person name="Eser C."/>
            <person name="Geiger H."/>
            <person name="Geisler M."/>
            <person name="Karotki L."/>
            <person name="Kirn A."/>
            <person name="Konantz J."/>
            <person name="Konantz M."/>
            <person name="Oberlander M."/>
            <person name="Rudolph-Geiger S."/>
            <person name="Teucke M."/>
            <person name="Lanz C."/>
            <person name="Raddatz G."/>
            <person name="Osoegawa K."/>
            <person name="Zhu B."/>
            <person name="Rapp A."/>
            <person name="Widaa S."/>
            <person name="Langford C."/>
            <person name="Yang F."/>
            <person name="Schuster S.C."/>
            <person name="Carter N.P."/>
            <person name="Harrow J."/>
            <person name="Ning Z."/>
            <person name="Herrero J."/>
            <person name="Searle S.M."/>
            <person name="Enright A."/>
            <person name="Geisler R."/>
            <person name="Plasterk R.H."/>
            <person name="Lee C."/>
            <person name="Westerfield M."/>
            <person name="de Jong P.J."/>
            <person name="Zon L.I."/>
            <person name="Postlethwait J.H."/>
            <person name="Nusslein-Volhard C."/>
            <person name="Hubbard T.J."/>
            <person name="Roest Crollius H."/>
            <person name="Rogers J."/>
            <person name="Stemple D.L."/>
        </authorList>
    </citation>
    <scope>NUCLEOTIDE SEQUENCE [LARGE SCALE GENOMIC DNA]</scope>
    <source>
        <strain>Tuebingen</strain>
    </source>
</reference>
<reference evidence="8" key="3">
    <citation type="submission" date="2003-07" db="EMBL/GenBank/DDBJ databases">
        <authorList>
            <consortium name="NIH - Zebrafish Gene Collection (ZGC) project"/>
        </authorList>
    </citation>
    <scope>NUCLEOTIDE SEQUENCE [LARGE SCALE MRNA]</scope>
    <source>
        <strain evidence="6">AB</strain>
    </source>
</reference>
<reference evidence="5" key="4">
    <citation type="journal article" date="2009" name="J. Cell Biol.">
        <title>Basal body stability and ciliogenesis requires the conserved component Poc1.</title>
        <authorList>
            <person name="Pearson C.G."/>
            <person name="Osborn D.P."/>
            <person name="Giddings T.H. Jr."/>
            <person name="Beales P.L."/>
            <person name="Winey M."/>
        </authorList>
    </citation>
    <scope>FUNCTION</scope>
</reference>
<protein>
    <recommendedName>
        <fullName evidence="1">POC1 centriolar protein homolog B</fullName>
    </recommendedName>
    <alternativeName>
        <fullName evidence="8">WD repeat domain 51B</fullName>
    </alternativeName>
</protein>